<reference key="1">
    <citation type="submission" date="2004-12" db="EMBL/GenBank/DDBJ databases">
        <title>Immunological screening of Periplaneta americana cDNA expression libraries with serum immunized with soluble protein antigens derived from Periplaneta fuliginosa.</title>
        <authorList>
            <person name="Xu S."/>
            <person name="Wang S."/>
            <person name="Wu S."/>
        </authorList>
    </citation>
    <scope>NUCLEOTIDE SEQUENCE [MRNA]</scope>
</reference>
<keyword id="KW-0963">Cytoplasm</keyword>
<keyword id="KW-0687">Ribonucleoprotein</keyword>
<keyword id="KW-0689">Ribosomal protein</keyword>
<protein>
    <recommendedName>
        <fullName evidence="1">Small ribosomal subunit protein eS1</fullName>
    </recommendedName>
    <alternativeName>
        <fullName evidence="3">40S ribosomal protein S3a</fullName>
    </alternativeName>
</protein>
<feature type="initiator methionine" description="Removed" evidence="1">
    <location>
        <position position="1"/>
    </location>
</feature>
<feature type="chain" id="PRO_0000389317" description="Small ribosomal subunit protein eS1">
    <location>
        <begin position="2"/>
        <end position="263"/>
    </location>
</feature>
<feature type="region of interest" description="Disordered" evidence="2">
    <location>
        <begin position="236"/>
        <end position="263"/>
    </location>
</feature>
<feature type="compositionally biased region" description="Basic and acidic residues" evidence="2">
    <location>
        <begin position="236"/>
        <end position="254"/>
    </location>
</feature>
<evidence type="ECO:0000255" key="1">
    <source>
        <dbReference type="HAMAP-Rule" id="MF_03122"/>
    </source>
</evidence>
<evidence type="ECO:0000256" key="2">
    <source>
        <dbReference type="SAM" id="MobiDB-lite"/>
    </source>
</evidence>
<evidence type="ECO:0000305" key="3"/>
<gene>
    <name type="ORF">Parcxpwex01</name>
</gene>
<dbReference type="EMBL" id="AY850276">
    <property type="protein sequence ID" value="AAW57773.1"/>
    <property type="molecule type" value="mRNA"/>
</dbReference>
<dbReference type="SMR" id="Q5G5C4"/>
<dbReference type="OrthoDB" id="9834376at2759"/>
<dbReference type="GO" id="GO:0022627">
    <property type="term" value="C:cytosolic small ribosomal subunit"/>
    <property type="evidence" value="ECO:0007669"/>
    <property type="project" value="UniProtKB-UniRule"/>
</dbReference>
<dbReference type="GO" id="GO:0003735">
    <property type="term" value="F:structural constituent of ribosome"/>
    <property type="evidence" value="ECO:0007669"/>
    <property type="project" value="UniProtKB-UniRule"/>
</dbReference>
<dbReference type="GO" id="GO:0006412">
    <property type="term" value="P:translation"/>
    <property type="evidence" value="ECO:0007669"/>
    <property type="project" value="UniProtKB-UniRule"/>
</dbReference>
<dbReference type="HAMAP" id="MF_03122">
    <property type="entry name" value="Ribosomal_eS1_euk"/>
    <property type="match status" value="1"/>
</dbReference>
<dbReference type="InterPro" id="IPR001593">
    <property type="entry name" value="Ribosomal_eS1"/>
</dbReference>
<dbReference type="InterPro" id="IPR027500">
    <property type="entry name" value="Ribosomal_eS1_euk"/>
</dbReference>
<dbReference type="PANTHER" id="PTHR11830">
    <property type="entry name" value="40S RIBOSOMAL PROTEIN S3A"/>
    <property type="match status" value="1"/>
</dbReference>
<dbReference type="Pfam" id="PF01015">
    <property type="entry name" value="Ribosomal_S3Ae"/>
    <property type="match status" value="1"/>
</dbReference>
<dbReference type="SMART" id="SM01397">
    <property type="entry name" value="Ribosomal_S3Ae"/>
    <property type="match status" value="1"/>
</dbReference>
<accession>Q5G5C4</accession>
<comment type="subunit">
    <text evidence="1">Component of the small ribosomal subunit. Mature ribosomes consist of a small (40S) and a large (60S) subunit. The 40S subunit contains about 33 different proteins and 1 molecule of RNA (18S). The 60S subunit contains about 49 different proteins and 3 molecules of RNA (28S, 5.8S and 5S).</text>
</comment>
<comment type="subcellular location">
    <subcellularLocation>
        <location evidence="1">Cytoplasm</location>
    </subcellularLocation>
</comment>
<comment type="similarity">
    <text evidence="1">Belongs to the eukaryotic ribosomal protein eS1 family.</text>
</comment>
<sequence>MAVGKNKGLSKGGKKGVKKKIVDPFTRKDWYDVKAPSMFATRQIGKTLVNRTQGTKIASEGLKYRVFEVSLADLQNDNDAERSFRKFRLIAEDVQGRNVLTNFHGMDLTTDKLRSMVKKWQTLIEANVDVKTTDGYLLRVFCIGFTNKDQMSQRKTCYAQHTQVRAIRKKMVEIITRDVTSSDLKEVVNKLLPDSIAKDIEKACQGIYPLHDVYIRKVKVLKKPRFELSKLLELHGDGKGGSDEPGARVDRPEGYEPPVQETV</sequence>
<proteinExistence type="evidence at transcript level"/>
<name>RS3A_PERAM</name>
<organism>
    <name type="scientific">Periplaneta americana</name>
    <name type="common">American cockroach</name>
    <name type="synonym">Blatta americana</name>
    <dbReference type="NCBI Taxonomy" id="6978"/>
    <lineage>
        <taxon>Eukaryota</taxon>
        <taxon>Metazoa</taxon>
        <taxon>Ecdysozoa</taxon>
        <taxon>Arthropoda</taxon>
        <taxon>Hexapoda</taxon>
        <taxon>Insecta</taxon>
        <taxon>Pterygota</taxon>
        <taxon>Neoptera</taxon>
        <taxon>Polyneoptera</taxon>
        <taxon>Dictyoptera</taxon>
        <taxon>Blattodea</taxon>
        <taxon>Blattoidea</taxon>
        <taxon>Blattidae</taxon>
        <taxon>Blattinae</taxon>
        <taxon>Periplaneta</taxon>
    </lineage>
</organism>